<proteinExistence type="inferred from homology"/>
<feature type="chain" id="PRO_1000101345" description="Glycine--tRNA ligase beta subunit">
    <location>
        <begin position="1"/>
        <end position="679"/>
    </location>
</feature>
<reference key="1">
    <citation type="journal article" date="2002" name="Proc. Natl. Acad. Sci. U.S.A.">
        <title>Complete genome sequence and comparative genomic analysis of an emerging human pathogen, serotype V Streptococcus agalactiae.</title>
        <authorList>
            <person name="Tettelin H."/>
            <person name="Masignani V."/>
            <person name="Cieslewicz M.J."/>
            <person name="Eisen J.A."/>
            <person name="Peterson S.N."/>
            <person name="Wessels M.R."/>
            <person name="Paulsen I.T."/>
            <person name="Nelson K.E."/>
            <person name="Margarit I."/>
            <person name="Read T.D."/>
            <person name="Madoff L.C."/>
            <person name="Wolf A.M."/>
            <person name="Beanan M.J."/>
            <person name="Brinkac L.M."/>
            <person name="Daugherty S.C."/>
            <person name="DeBoy R.T."/>
            <person name="Durkin A.S."/>
            <person name="Kolonay J.F."/>
            <person name="Madupu R."/>
            <person name="Lewis M.R."/>
            <person name="Radune D."/>
            <person name="Fedorova N.B."/>
            <person name="Scanlan D."/>
            <person name="Khouri H.M."/>
            <person name="Mulligan S."/>
            <person name="Carty H.A."/>
            <person name="Cline R.T."/>
            <person name="Van Aken S.E."/>
            <person name="Gill J."/>
            <person name="Scarselli M."/>
            <person name="Mora M."/>
            <person name="Iacobini E.T."/>
            <person name="Brettoni C."/>
            <person name="Galli G."/>
            <person name="Mariani M."/>
            <person name="Vegni F."/>
            <person name="Maione D."/>
            <person name="Rinaudo D."/>
            <person name="Rappuoli R."/>
            <person name="Telford J.L."/>
            <person name="Kasper D.L."/>
            <person name="Grandi G."/>
            <person name="Fraser C.M."/>
        </authorList>
    </citation>
    <scope>NUCLEOTIDE SEQUENCE [LARGE SCALE GENOMIC DNA]</scope>
    <source>
        <strain>ATCC BAA-611 / 2603 V/R</strain>
    </source>
</reference>
<comment type="catalytic activity">
    <reaction evidence="1">
        <text>tRNA(Gly) + glycine + ATP = glycyl-tRNA(Gly) + AMP + diphosphate</text>
        <dbReference type="Rhea" id="RHEA:16013"/>
        <dbReference type="Rhea" id="RHEA-COMP:9664"/>
        <dbReference type="Rhea" id="RHEA-COMP:9683"/>
        <dbReference type="ChEBI" id="CHEBI:30616"/>
        <dbReference type="ChEBI" id="CHEBI:33019"/>
        <dbReference type="ChEBI" id="CHEBI:57305"/>
        <dbReference type="ChEBI" id="CHEBI:78442"/>
        <dbReference type="ChEBI" id="CHEBI:78522"/>
        <dbReference type="ChEBI" id="CHEBI:456215"/>
        <dbReference type="EC" id="6.1.1.14"/>
    </reaction>
</comment>
<comment type="subunit">
    <text evidence="1">Tetramer of two alpha and two beta subunits.</text>
</comment>
<comment type="subcellular location">
    <subcellularLocation>
        <location evidence="1">Cytoplasm</location>
    </subcellularLocation>
</comment>
<comment type="similarity">
    <text evidence="1">Belongs to the class-II aminoacyl-tRNA synthetase family.</text>
</comment>
<organism>
    <name type="scientific">Streptococcus agalactiae serotype V (strain ATCC BAA-611 / 2603 V/R)</name>
    <dbReference type="NCBI Taxonomy" id="208435"/>
    <lineage>
        <taxon>Bacteria</taxon>
        <taxon>Bacillati</taxon>
        <taxon>Bacillota</taxon>
        <taxon>Bacilli</taxon>
        <taxon>Lactobacillales</taxon>
        <taxon>Streptococcaceae</taxon>
        <taxon>Streptococcus</taxon>
    </lineage>
</organism>
<protein>
    <recommendedName>
        <fullName evidence="1">Glycine--tRNA ligase beta subunit</fullName>
        <ecNumber evidence="1">6.1.1.14</ecNumber>
    </recommendedName>
    <alternativeName>
        <fullName evidence="1">Glycyl-tRNA synthetase beta subunit</fullName>
        <shortName evidence="1">GlyRS</shortName>
    </alternativeName>
</protein>
<sequence>MTKDLLLELGLEELPAYVVTPSEKQLGQKMVKFLEDHRLSFETVQIFSTPRRLAVRVKGLADQQTDLTEDFKGPSKKIALDAEGNFSKAAQGFVRGKGLSVDDIEFREVKGEEYVYVTKHETGKSAIDVLASVTEVLTELTFPVNMHWANNSFEYIRPVHTLVVLLDDQALELDFLDIHSGRISRGHRFLGSDTEISSASSYEDDLRQQFVIADAKERQQMIVNQIHAIEEKKNISVEIDEDLLNEVLNLVEYPTAFLGSFDEKYLDVPEEVLVTSMKNHQRYFVVRDRDGKLLPNFISVRNGNAEHIENVIKGNEKVLVARLEDGEFFWQEDQKLNIADLVEKLKQVTFHEKIGSLYEHMDRVKVISQYLAEKADLSDEEKLAVLRAASIYKFDLLTGMVDEFDELQGIMGEKYALLAGEQPAVAAAIREHYMPTSADGELPETRVGAILALADKFDTLLSFFSVGLIPSGSNDPYALRRATQGIVRILEAFGWDIPLDELVTNLYGLSFASLDYANQKEVMAFISARIEKMIGSKVPKDIREAVLESDTYIVSLILEASQALVQKSKDAQYKVSVESLSRAFNLAEKVTHSVLVDSSLFENNQEKALYQAILSLELTEDMHDNLDKLFALSPIINDFFDNTMVMTDDEKMKQNRLAILNSLVAKARTVAAFNLLNTK</sequence>
<evidence type="ECO:0000255" key="1">
    <source>
        <dbReference type="HAMAP-Rule" id="MF_00255"/>
    </source>
</evidence>
<keyword id="KW-0030">Aminoacyl-tRNA synthetase</keyword>
<keyword id="KW-0067">ATP-binding</keyword>
<keyword id="KW-0963">Cytoplasm</keyword>
<keyword id="KW-0436">Ligase</keyword>
<keyword id="KW-0547">Nucleotide-binding</keyword>
<keyword id="KW-0648">Protein biosynthesis</keyword>
<keyword id="KW-1185">Reference proteome</keyword>
<accession>Q8E1T3</accession>
<dbReference type="EC" id="6.1.1.14" evidence="1"/>
<dbReference type="EMBL" id="AE009948">
    <property type="protein sequence ID" value="AAM99177.1"/>
    <property type="molecule type" value="Genomic_DNA"/>
</dbReference>
<dbReference type="RefSeq" id="NP_687305.1">
    <property type="nucleotide sequence ID" value="NC_004116.1"/>
</dbReference>
<dbReference type="RefSeq" id="WP_000159081.1">
    <property type="nucleotide sequence ID" value="NC_004116.1"/>
</dbReference>
<dbReference type="SMR" id="Q8E1T3"/>
<dbReference type="STRING" id="208435.SAG0270"/>
<dbReference type="KEGG" id="sag:SAG0270"/>
<dbReference type="PATRIC" id="fig|208435.3.peg.268"/>
<dbReference type="HOGENOM" id="CLU_007220_2_2_9"/>
<dbReference type="OrthoDB" id="9775440at2"/>
<dbReference type="Proteomes" id="UP000000821">
    <property type="component" value="Chromosome"/>
</dbReference>
<dbReference type="GO" id="GO:0005829">
    <property type="term" value="C:cytosol"/>
    <property type="evidence" value="ECO:0007669"/>
    <property type="project" value="TreeGrafter"/>
</dbReference>
<dbReference type="GO" id="GO:0004814">
    <property type="term" value="F:arginine-tRNA ligase activity"/>
    <property type="evidence" value="ECO:0007669"/>
    <property type="project" value="InterPro"/>
</dbReference>
<dbReference type="GO" id="GO:0005524">
    <property type="term" value="F:ATP binding"/>
    <property type="evidence" value="ECO:0007669"/>
    <property type="project" value="UniProtKB-UniRule"/>
</dbReference>
<dbReference type="GO" id="GO:0004820">
    <property type="term" value="F:glycine-tRNA ligase activity"/>
    <property type="evidence" value="ECO:0007669"/>
    <property type="project" value="UniProtKB-UniRule"/>
</dbReference>
<dbReference type="GO" id="GO:0006420">
    <property type="term" value="P:arginyl-tRNA aminoacylation"/>
    <property type="evidence" value="ECO:0007669"/>
    <property type="project" value="InterPro"/>
</dbReference>
<dbReference type="GO" id="GO:0006426">
    <property type="term" value="P:glycyl-tRNA aminoacylation"/>
    <property type="evidence" value="ECO:0007669"/>
    <property type="project" value="UniProtKB-UniRule"/>
</dbReference>
<dbReference type="HAMAP" id="MF_00255">
    <property type="entry name" value="Gly_tRNA_synth_beta"/>
    <property type="match status" value="1"/>
</dbReference>
<dbReference type="InterPro" id="IPR008909">
    <property type="entry name" value="DALR_anticod-bd"/>
</dbReference>
<dbReference type="InterPro" id="IPR015944">
    <property type="entry name" value="Gly-tRNA-synth_bsu"/>
</dbReference>
<dbReference type="InterPro" id="IPR006194">
    <property type="entry name" value="Gly-tRNA-synth_heterodimer"/>
</dbReference>
<dbReference type="NCBIfam" id="TIGR00211">
    <property type="entry name" value="glyS"/>
    <property type="match status" value="1"/>
</dbReference>
<dbReference type="PANTHER" id="PTHR30075:SF2">
    <property type="entry name" value="GLYCINE--TRNA LIGASE, CHLOROPLASTIC_MITOCHONDRIAL 2"/>
    <property type="match status" value="1"/>
</dbReference>
<dbReference type="PANTHER" id="PTHR30075">
    <property type="entry name" value="GLYCYL-TRNA SYNTHETASE"/>
    <property type="match status" value="1"/>
</dbReference>
<dbReference type="Pfam" id="PF05746">
    <property type="entry name" value="DALR_1"/>
    <property type="match status" value="1"/>
</dbReference>
<dbReference type="Pfam" id="PF02092">
    <property type="entry name" value="tRNA_synt_2f"/>
    <property type="match status" value="1"/>
</dbReference>
<dbReference type="PRINTS" id="PR01045">
    <property type="entry name" value="TRNASYNTHGB"/>
</dbReference>
<dbReference type="SUPFAM" id="SSF109604">
    <property type="entry name" value="HD-domain/PDEase-like"/>
    <property type="match status" value="1"/>
</dbReference>
<dbReference type="PROSITE" id="PS50861">
    <property type="entry name" value="AA_TRNA_LIGASE_II_GLYAB"/>
    <property type="match status" value="1"/>
</dbReference>
<gene>
    <name evidence="1" type="primary">glyS</name>
    <name type="ordered locus">SAG0270</name>
</gene>
<name>SYGB_STRA5</name>